<sequence length="323" mass="35677">MKTTFLDFEQPIAELEAKIEELRFVQDDSVVDISEEIERLSKKSQQLTKDLYAHLTPWQVSQIARHPQRPYTLDYVSELFTDFHELHGDRAFADDLSIVGGLARFNGHACMVIGHQKGRDTKERAARNFGMPRPEGYRKAERLMRVAEKFGLPIFTFIDTPGAYPGVGAEERGQSEAIGHNLYVMAELKTPIIATVIGEGGSGGALAIAVADTVMMLQFSTYSVISPEGCASILWKSAAKAPEAAEALGLTAHRLKALGLIDKIVNEPLGGAHRDPKGTAALLRRALGDSLRQFQGMSVDALRERRFERLMAYGKYKETTARA</sequence>
<keyword id="KW-0067">ATP-binding</keyword>
<keyword id="KW-0963">Cytoplasm</keyword>
<keyword id="KW-0275">Fatty acid biosynthesis</keyword>
<keyword id="KW-0276">Fatty acid metabolism</keyword>
<keyword id="KW-0436">Ligase</keyword>
<keyword id="KW-0444">Lipid biosynthesis</keyword>
<keyword id="KW-0443">Lipid metabolism</keyword>
<keyword id="KW-0547">Nucleotide-binding</keyword>
<keyword id="KW-0808">Transferase</keyword>
<comment type="function">
    <text evidence="1">Component of the acetyl coenzyme A carboxylase (ACC) complex. First, biotin carboxylase catalyzes the carboxylation of biotin on its carrier protein (BCCP) and then the CO(2) group is transferred by the carboxyltransferase to acetyl-CoA to form malonyl-CoA.</text>
</comment>
<comment type="function">
    <text evidence="3">Does not confer resistance to the endogenous polyketide antibiotic thailandamide, does not confer resistance to thailandamide when expressed in S.typhimurium.</text>
</comment>
<comment type="catalytic activity">
    <reaction evidence="1">
        <text>N(6)-carboxybiotinyl-L-lysyl-[protein] + acetyl-CoA = N(6)-biotinyl-L-lysyl-[protein] + malonyl-CoA</text>
        <dbReference type="Rhea" id="RHEA:54728"/>
        <dbReference type="Rhea" id="RHEA-COMP:10505"/>
        <dbReference type="Rhea" id="RHEA-COMP:10506"/>
        <dbReference type="ChEBI" id="CHEBI:57288"/>
        <dbReference type="ChEBI" id="CHEBI:57384"/>
        <dbReference type="ChEBI" id="CHEBI:83144"/>
        <dbReference type="ChEBI" id="CHEBI:83145"/>
        <dbReference type="EC" id="2.1.3.15"/>
    </reaction>
</comment>
<comment type="pathway">
    <text evidence="1">Lipid metabolism; malonyl-CoA biosynthesis; malonyl-CoA from acetyl-CoA: step 1/1.</text>
</comment>
<comment type="subunit">
    <text evidence="1">Acetyl-CoA carboxylase is a heterohexamer composed of biotin carboxyl carrier protein (AccB), biotin carboxylase (AccC) and two subunits each of ACCase subunit alpha (AccA) and ACCase subunit beta (AccD).</text>
</comment>
<comment type="subcellular location">
    <subcellularLocation>
        <location evidence="1">Cytoplasm</location>
    </subcellularLocation>
</comment>
<comment type="disruption phenotype">
    <text evidence="3">Remains resistant to thailandamide.</text>
</comment>
<comment type="similarity">
    <text evidence="1">Belongs to the AccA family.</text>
</comment>
<feature type="chain" id="PRO_0000452508" description="Acetyl-coenzyme A carboxylase carboxyl transferase subunit alpha 1">
    <location>
        <begin position="1"/>
        <end position="323"/>
    </location>
</feature>
<feature type="domain" description="CoA carboxyltransferase C-terminal" evidence="2">
    <location>
        <begin position="39"/>
        <end position="293"/>
    </location>
</feature>
<organism>
    <name type="scientific">Burkholderia thailandensis (strain ATCC 700388 / DSM 13276 / CCUG 48851 / CIP 106301 / E264)</name>
    <dbReference type="NCBI Taxonomy" id="271848"/>
    <lineage>
        <taxon>Bacteria</taxon>
        <taxon>Pseudomonadati</taxon>
        <taxon>Pseudomonadota</taxon>
        <taxon>Betaproteobacteria</taxon>
        <taxon>Burkholderiales</taxon>
        <taxon>Burkholderiaceae</taxon>
        <taxon>Burkholderia</taxon>
        <taxon>pseudomallei group</taxon>
    </lineage>
</organism>
<evidence type="ECO:0000255" key="1">
    <source>
        <dbReference type="HAMAP-Rule" id="MF_00823"/>
    </source>
</evidence>
<evidence type="ECO:0000255" key="2">
    <source>
        <dbReference type="PROSITE-ProRule" id="PRU01137"/>
    </source>
</evidence>
<evidence type="ECO:0000269" key="3">
    <source>
    </source>
</evidence>
<evidence type="ECO:0000303" key="4">
    <source>
    </source>
</evidence>
<dbReference type="EC" id="2.1.3.15" evidence="1"/>
<dbReference type="EMBL" id="CP000086">
    <property type="protein sequence ID" value="ABC36311.1"/>
    <property type="molecule type" value="Genomic_DNA"/>
</dbReference>
<dbReference type="RefSeq" id="WP_009890295.1">
    <property type="nucleotide sequence ID" value="NZ_CP008785.1"/>
</dbReference>
<dbReference type="SMR" id="Q2SX76"/>
<dbReference type="GeneID" id="45121674"/>
<dbReference type="KEGG" id="bte:BTH_I1943"/>
<dbReference type="HOGENOM" id="CLU_015486_0_2_4"/>
<dbReference type="UniPathway" id="UPA00655">
    <property type="reaction ID" value="UER00711"/>
</dbReference>
<dbReference type="Proteomes" id="UP000001930">
    <property type="component" value="Chromosome I"/>
</dbReference>
<dbReference type="GO" id="GO:0009317">
    <property type="term" value="C:acetyl-CoA carboxylase complex"/>
    <property type="evidence" value="ECO:0007669"/>
    <property type="project" value="InterPro"/>
</dbReference>
<dbReference type="GO" id="GO:0003989">
    <property type="term" value="F:acetyl-CoA carboxylase activity"/>
    <property type="evidence" value="ECO:0007669"/>
    <property type="project" value="InterPro"/>
</dbReference>
<dbReference type="GO" id="GO:0005524">
    <property type="term" value="F:ATP binding"/>
    <property type="evidence" value="ECO:0007669"/>
    <property type="project" value="UniProtKB-KW"/>
</dbReference>
<dbReference type="GO" id="GO:0016743">
    <property type="term" value="F:carboxyl- or carbamoyltransferase activity"/>
    <property type="evidence" value="ECO:0007669"/>
    <property type="project" value="UniProtKB-UniRule"/>
</dbReference>
<dbReference type="GO" id="GO:0006633">
    <property type="term" value="P:fatty acid biosynthetic process"/>
    <property type="evidence" value="ECO:0007669"/>
    <property type="project" value="UniProtKB-KW"/>
</dbReference>
<dbReference type="GO" id="GO:2001295">
    <property type="term" value="P:malonyl-CoA biosynthetic process"/>
    <property type="evidence" value="ECO:0007669"/>
    <property type="project" value="UniProtKB-UniRule"/>
</dbReference>
<dbReference type="Gene3D" id="3.90.226.10">
    <property type="entry name" value="2-enoyl-CoA Hydratase, Chain A, domain 1"/>
    <property type="match status" value="1"/>
</dbReference>
<dbReference type="HAMAP" id="MF_00823">
    <property type="entry name" value="AcetylCoA_CT_alpha"/>
    <property type="match status" value="1"/>
</dbReference>
<dbReference type="InterPro" id="IPR001095">
    <property type="entry name" value="Acetyl_CoA_COase_a_su"/>
</dbReference>
<dbReference type="InterPro" id="IPR029045">
    <property type="entry name" value="ClpP/crotonase-like_dom_sf"/>
</dbReference>
<dbReference type="InterPro" id="IPR011763">
    <property type="entry name" value="COA_CT_C"/>
</dbReference>
<dbReference type="NCBIfam" id="TIGR00513">
    <property type="entry name" value="accA"/>
    <property type="match status" value="1"/>
</dbReference>
<dbReference type="NCBIfam" id="NF041504">
    <property type="entry name" value="AccA_sub"/>
    <property type="match status" value="1"/>
</dbReference>
<dbReference type="NCBIfam" id="NF004344">
    <property type="entry name" value="PRK05724.1"/>
    <property type="match status" value="1"/>
</dbReference>
<dbReference type="PANTHER" id="PTHR42853">
    <property type="entry name" value="ACETYL-COENZYME A CARBOXYLASE CARBOXYL TRANSFERASE SUBUNIT ALPHA"/>
    <property type="match status" value="1"/>
</dbReference>
<dbReference type="PANTHER" id="PTHR42853:SF3">
    <property type="entry name" value="ACETYL-COENZYME A CARBOXYLASE CARBOXYL TRANSFERASE SUBUNIT ALPHA, CHLOROPLASTIC"/>
    <property type="match status" value="1"/>
</dbReference>
<dbReference type="Pfam" id="PF03255">
    <property type="entry name" value="ACCA"/>
    <property type="match status" value="1"/>
</dbReference>
<dbReference type="PRINTS" id="PR01069">
    <property type="entry name" value="ACCCTRFRASEA"/>
</dbReference>
<dbReference type="SUPFAM" id="SSF52096">
    <property type="entry name" value="ClpP/crotonase"/>
    <property type="match status" value="1"/>
</dbReference>
<dbReference type="PROSITE" id="PS50989">
    <property type="entry name" value="COA_CT_CTER"/>
    <property type="match status" value="1"/>
</dbReference>
<name>ACCA1_BURTA</name>
<reference key="1">
    <citation type="journal article" date="2005" name="BMC Genomics">
        <title>Bacterial genome adaptation to niches: divergence of the potential virulence genes in three Burkholderia species of different survival strategies.</title>
        <authorList>
            <person name="Kim H.S."/>
            <person name="Schell M.A."/>
            <person name="Yu Y."/>
            <person name="Ulrich R.L."/>
            <person name="Sarria S.H."/>
            <person name="Nierman W.C."/>
            <person name="DeShazer D."/>
        </authorList>
    </citation>
    <scope>NUCLEOTIDE SEQUENCE [LARGE SCALE GENOMIC DNA]</scope>
    <source>
        <strain>ATCC 700388 / DSM 13276 / CCUG 48851 / CIP 106301 / E264</strain>
    </source>
</reference>
<reference key="2">
    <citation type="journal article" date="2018" name="Antimicrob. Agents Chemother.">
        <title>Thailandamide, a Fatty Acid Synthesis Antibiotic That Is Coexpressed with a Resistant Target Gene.</title>
        <authorList>
            <person name="Wozniak C.E."/>
            <person name="Lin Z."/>
            <person name="Schmidt E.W."/>
            <person name="Hughes K.T."/>
            <person name="Liou T.G."/>
        </authorList>
    </citation>
    <scope>FUNCTION</scope>
    <scope>DISRUPTION PHENOTYPE</scope>
    <source>
        <strain>ATCC 700388 / DSM 13276 / CCUG 48851 / CIP 106301 / E264</strain>
    </source>
</reference>
<proteinExistence type="inferred from homology"/>
<protein>
    <recommendedName>
        <fullName evidence="1">Acetyl-coenzyme A carboxylase carboxyl transferase subunit alpha 1</fullName>
        <shortName evidence="1">ACCase subunit alpha 1</shortName>
        <shortName evidence="1">Acetyl-CoA carboxylase carboxyltransferase subunit alpha 1</shortName>
        <ecNumber evidence="1">2.1.3.15</ecNumber>
    </recommendedName>
</protein>
<accession>Q2SX76</accession>
<gene>
    <name evidence="4" type="primary">accA-1</name>
    <name type="ordered locus">BTH_I1943</name>
</gene>